<dbReference type="EC" id="2.7.2.11" evidence="1"/>
<dbReference type="EMBL" id="AM406670">
    <property type="protein sequence ID" value="CAL95787.1"/>
    <property type="molecule type" value="Genomic_DNA"/>
</dbReference>
<dbReference type="RefSeq" id="WP_011766895.1">
    <property type="nucleotide sequence ID" value="NC_008702.1"/>
</dbReference>
<dbReference type="SMR" id="A1KAD1"/>
<dbReference type="STRING" id="62928.azo3170"/>
<dbReference type="KEGG" id="azo:azo3170"/>
<dbReference type="eggNOG" id="COG0263">
    <property type="taxonomic scope" value="Bacteria"/>
</dbReference>
<dbReference type="HOGENOM" id="CLU_025400_2_0_4"/>
<dbReference type="UniPathway" id="UPA00098">
    <property type="reaction ID" value="UER00359"/>
</dbReference>
<dbReference type="Proteomes" id="UP000002588">
    <property type="component" value="Chromosome"/>
</dbReference>
<dbReference type="GO" id="GO:0005829">
    <property type="term" value="C:cytosol"/>
    <property type="evidence" value="ECO:0007669"/>
    <property type="project" value="TreeGrafter"/>
</dbReference>
<dbReference type="GO" id="GO:0005524">
    <property type="term" value="F:ATP binding"/>
    <property type="evidence" value="ECO:0007669"/>
    <property type="project" value="UniProtKB-KW"/>
</dbReference>
<dbReference type="GO" id="GO:0004349">
    <property type="term" value="F:glutamate 5-kinase activity"/>
    <property type="evidence" value="ECO:0007669"/>
    <property type="project" value="UniProtKB-UniRule"/>
</dbReference>
<dbReference type="GO" id="GO:0003723">
    <property type="term" value="F:RNA binding"/>
    <property type="evidence" value="ECO:0007669"/>
    <property type="project" value="InterPro"/>
</dbReference>
<dbReference type="GO" id="GO:0055129">
    <property type="term" value="P:L-proline biosynthetic process"/>
    <property type="evidence" value="ECO:0007669"/>
    <property type="project" value="UniProtKB-UniRule"/>
</dbReference>
<dbReference type="CDD" id="cd04242">
    <property type="entry name" value="AAK_G5K_ProB"/>
    <property type="match status" value="1"/>
</dbReference>
<dbReference type="CDD" id="cd21157">
    <property type="entry name" value="PUA_G5K"/>
    <property type="match status" value="1"/>
</dbReference>
<dbReference type="FunFam" id="2.30.130.10:FF:000007">
    <property type="entry name" value="Glutamate 5-kinase"/>
    <property type="match status" value="1"/>
</dbReference>
<dbReference type="FunFam" id="3.40.1160.10:FF:000018">
    <property type="entry name" value="Glutamate 5-kinase"/>
    <property type="match status" value="1"/>
</dbReference>
<dbReference type="Gene3D" id="3.40.1160.10">
    <property type="entry name" value="Acetylglutamate kinase-like"/>
    <property type="match status" value="1"/>
</dbReference>
<dbReference type="Gene3D" id="2.30.130.10">
    <property type="entry name" value="PUA domain"/>
    <property type="match status" value="1"/>
</dbReference>
<dbReference type="HAMAP" id="MF_00456">
    <property type="entry name" value="ProB"/>
    <property type="match status" value="1"/>
</dbReference>
<dbReference type="InterPro" id="IPR036393">
    <property type="entry name" value="AceGlu_kinase-like_sf"/>
</dbReference>
<dbReference type="InterPro" id="IPR001048">
    <property type="entry name" value="Asp/Glu/Uridylate_kinase"/>
</dbReference>
<dbReference type="InterPro" id="IPR041739">
    <property type="entry name" value="G5K_ProB"/>
</dbReference>
<dbReference type="InterPro" id="IPR001057">
    <property type="entry name" value="Glu/AcGlu_kinase"/>
</dbReference>
<dbReference type="InterPro" id="IPR011529">
    <property type="entry name" value="Glu_5kinase"/>
</dbReference>
<dbReference type="InterPro" id="IPR005715">
    <property type="entry name" value="Glu_5kinase/COase_Synthase"/>
</dbReference>
<dbReference type="InterPro" id="IPR019797">
    <property type="entry name" value="Glutamate_5-kinase_CS"/>
</dbReference>
<dbReference type="InterPro" id="IPR002478">
    <property type="entry name" value="PUA"/>
</dbReference>
<dbReference type="InterPro" id="IPR015947">
    <property type="entry name" value="PUA-like_sf"/>
</dbReference>
<dbReference type="InterPro" id="IPR036974">
    <property type="entry name" value="PUA_sf"/>
</dbReference>
<dbReference type="NCBIfam" id="TIGR01027">
    <property type="entry name" value="proB"/>
    <property type="match status" value="1"/>
</dbReference>
<dbReference type="PANTHER" id="PTHR43654">
    <property type="entry name" value="GLUTAMATE 5-KINASE"/>
    <property type="match status" value="1"/>
</dbReference>
<dbReference type="PANTHER" id="PTHR43654:SF1">
    <property type="entry name" value="ISOPENTENYL PHOSPHATE KINASE"/>
    <property type="match status" value="1"/>
</dbReference>
<dbReference type="Pfam" id="PF00696">
    <property type="entry name" value="AA_kinase"/>
    <property type="match status" value="1"/>
</dbReference>
<dbReference type="Pfam" id="PF01472">
    <property type="entry name" value="PUA"/>
    <property type="match status" value="1"/>
</dbReference>
<dbReference type="PIRSF" id="PIRSF000729">
    <property type="entry name" value="GK"/>
    <property type="match status" value="1"/>
</dbReference>
<dbReference type="PRINTS" id="PR00474">
    <property type="entry name" value="GLU5KINASE"/>
</dbReference>
<dbReference type="SMART" id="SM00359">
    <property type="entry name" value="PUA"/>
    <property type="match status" value="1"/>
</dbReference>
<dbReference type="SUPFAM" id="SSF53633">
    <property type="entry name" value="Carbamate kinase-like"/>
    <property type="match status" value="1"/>
</dbReference>
<dbReference type="SUPFAM" id="SSF88697">
    <property type="entry name" value="PUA domain-like"/>
    <property type="match status" value="1"/>
</dbReference>
<dbReference type="PROSITE" id="PS00902">
    <property type="entry name" value="GLUTAMATE_5_KINASE"/>
    <property type="match status" value="1"/>
</dbReference>
<dbReference type="PROSITE" id="PS50890">
    <property type="entry name" value="PUA"/>
    <property type="match status" value="1"/>
</dbReference>
<protein>
    <recommendedName>
        <fullName evidence="1">Glutamate 5-kinase</fullName>
        <ecNumber evidence="1">2.7.2.11</ecNumber>
    </recommendedName>
    <alternativeName>
        <fullName evidence="1">Gamma-glutamyl kinase</fullName>
        <shortName evidence="1">GK</shortName>
    </alternativeName>
</protein>
<comment type="function">
    <text evidence="1">Catalyzes the transfer of a phosphate group to glutamate to form L-glutamate 5-phosphate.</text>
</comment>
<comment type="catalytic activity">
    <reaction evidence="1">
        <text>L-glutamate + ATP = L-glutamyl 5-phosphate + ADP</text>
        <dbReference type="Rhea" id="RHEA:14877"/>
        <dbReference type="ChEBI" id="CHEBI:29985"/>
        <dbReference type="ChEBI" id="CHEBI:30616"/>
        <dbReference type="ChEBI" id="CHEBI:58274"/>
        <dbReference type="ChEBI" id="CHEBI:456216"/>
        <dbReference type="EC" id="2.7.2.11"/>
    </reaction>
</comment>
<comment type="pathway">
    <text evidence="1">Amino-acid biosynthesis; L-proline biosynthesis; L-glutamate 5-semialdehyde from L-glutamate: step 1/2.</text>
</comment>
<comment type="subcellular location">
    <subcellularLocation>
        <location evidence="1">Cytoplasm</location>
    </subcellularLocation>
</comment>
<comment type="similarity">
    <text evidence="1">Belongs to the glutamate 5-kinase family.</text>
</comment>
<organism>
    <name type="scientific">Azoarcus sp. (strain BH72)</name>
    <dbReference type="NCBI Taxonomy" id="418699"/>
    <lineage>
        <taxon>Bacteria</taxon>
        <taxon>Pseudomonadati</taxon>
        <taxon>Pseudomonadota</taxon>
        <taxon>Betaproteobacteria</taxon>
        <taxon>Rhodocyclales</taxon>
        <taxon>Zoogloeaceae</taxon>
        <taxon>Azoarcus</taxon>
    </lineage>
</organism>
<sequence>MRDKIKNARRLIVKVGSALVTNNGAGLDPAALDDWARQIAALRARGREIVLVSSGAIAAGMQRLGWVKRPHEMHRLQAAAAVGQMGLVEAYEKAFSRHGLQTAQILLTHEDLADRTRYLNARSTLVTLLELGVVPIINENDTVVTDEIKFGDNDTLGALVANLVEADTLIILTDQRGLYTADPRRDPGATLISEGRAEDRQYEAMAGGAGSGISKGGMITKIRAAQRAARSGAHTCIASGRETDPLLRLADGEAVGTLLYADSTPLQARKQWLADHLQLAGSLIVDAGAARALDDGRSLLPVGVVEVQGEFKRGAAVACRDEHGTELARGLVNYSSAECRRILRRPTSDIEQLLGYIDEPELIHRDNLVIR</sequence>
<reference key="1">
    <citation type="journal article" date="2006" name="Nat. Biotechnol.">
        <title>Complete genome of the mutualistic, N2-fixing grass endophyte Azoarcus sp. strain BH72.</title>
        <authorList>
            <person name="Krause A."/>
            <person name="Ramakumar A."/>
            <person name="Bartels D."/>
            <person name="Battistoni F."/>
            <person name="Bekel T."/>
            <person name="Boch J."/>
            <person name="Boehm M."/>
            <person name="Friedrich F."/>
            <person name="Hurek T."/>
            <person name="Krause L."/>
            <person name="Linke B."/>
            <person name="McHardy A.C."/>
            <person name="Sarkar A."/>
            <person name="Schneiker S."/>
            <person name="Syed A.A."/>
            <person name="Thauer R."/>
            <person name="Vorhoelter F.-J."/>
            <person name="Weidner S."/>
            <person name="Puehler A."/>
            <person name="Reinhold-Hurek B."/>
            <person name="Kaiser O."/>
            <person name="Goesmann A."/>
        </authorList>
    </citation>
    <scope>NUCLEOTIDE SEQUENCE [LARGE SCALE GENOMIC DNA]</scope>
    <source>
        <strain>BH72</strain>
    </source>
</reference>
<keyword id="KW-0028">Amino-acid biosynthesis</keyword>
<keyword id="KW-0067">ATP-binding</keyword>
<keyword id="KW-0963">Cytoplasm</keyword>
<keyword id="KW-0418">Kinase</keyword>
<keyword id="KW-0547">Nucleotide-binding</keyword>
<keyword id="KW-0641">Proline biosynthesis</keyword>
<keyword id="KW-1185">Reference proteome</keyword>
<keyword id="KW-0808">Transferase</keyword>
<gene>
    <name evidence="1" type="primary">proB</name>
    <name type="ordered locus">azo3170</name>
</gene>
<evidence type="ECO:0000255" key="1">
    <source>
        <dbReference type="HAMAP-Rule" id="MF_00456"/>
    </source>
</evidence>
<accession>A1KAD1</accession>
<name>PROB_AZOSB</name>
<feature type="chain" id="PRO_1000081035" description="Glutamate 5-kinase">
    <location>
        <begin position="1"/>
        <end position="371"/>
    </location>
</feature>
<feature type="domain" description="PUA" evidence="1">
    <location>
        <begin position="280"/>
        <end position="357"/>
    </location>
</feature>
<feature type="binding site" evidence="1">
    <location>
        <position position="14"/>
    </location>
    <ligand>
        <name>ATP</name>
        <dbReference type="ChEBI" id="CHEBI:30616"/>
    </ligand>
</feature>
<feature type="binding site" evidence="1">
    <location>
        <position position="54"/>
    </location>
    <ligand>
        <name>substrate</name>
    </ligand>
</feature>
<feature type="binding site" evidence="1">
    <location>
        <position position="141"/>
    </location>
    <ligand>
        <name>substrate</name>
    </ligand>
</feature>
<feature type="binding site" evidence="1">
    <location>
        <position position="153"/>
    </location>
    <ligand>
        <name>substrate</name>
    </ligand>
</feature>
<feature type="binding site" evidence="1">
    <location>
        <begin position="173"/>
        <end position="174"/>
    </location>
    <ligand>
        <name>ATP</name>
        <dbReference type="ChEBI" id="CHEBI:30616"/>
    </ligand>
</feature>
<proteinExistence type="inferred from homology"/>